<reference key="1">
    <citation type="journal article" date="2006" name="Nat. Biotechnol.">
        <title>The genome and transcriptomes of the anti-tumor agent Clostridium novyi-NT.</title>
        <authorList>
            <person name="Bettegowda C."/>
            <person name="Huang X."/>
            <person name="Lin J."/>
            <person name="Cheong I."/>
            <person name="Kohli M."/>
            <person name="Szabo S.A."/>
            <person name="Zhang X."/>
            <person name="Diaz L.A. Jr."/>
            <person name="Velculescu V.E."/>
            <person name="Parmigiani G."/>
            <person name="Kinzler K.W."/>
            <person name="Vogelstein B."/>
            <person name="Zhou S."/>
        </authorList>
    </citation>
    <scope>NUCLEOTIDE SEQUENCE [LARGE SCALE GENOMIC DNA]</scope>
    <source>
        <strain>NT</strain>
    </source>
</reference>
<organism>
    <name type="scientific">Clostridium novyi (strain NT)</name>
    <dbReference type="NCBI Taxonomy" id="386415"/>
    <lineage>
        <taxon>Bacteria</taxon>
        <taxon>Bacillati</taxon>
        <taxon>Bacillota</taxon>
        <taxon>Clostridia</taxon>
        <taxon>Eubacteriales</taxon>
        <taxon>Clostridiaceae</taxon>
        <taxon>Clostridium</taxon>
    </lineage>
</organism>
<sequence length="235" mass="26135">MKIDLIISASDIKEEKIKNKTVVVIDILRATSVIVTALNNGCNEVIPVLEVEDAMKIVKDNRKKYILGGERNALKIEGFDFSNSPLDYTKDVVKDKTLVMTTTNGTRAIHGAMSAKNILIGAMINARSIANKVLELDNDLIIINSGTNGEFSIDDFVCAGYIIDCILKNRDAELSDIAITAHYVYSENKDIHSFVHKAKHYNILSNLGLKDDINYCCSKDIVDIVPEFHYPKITK</sequence>
<evidence type="ECO:0000255" key="1">
    <source>
        <dbReference type="HAMAP-Rule" id="MF_00490"/>
    </source>
</evidence>
<keyword id="KW-0378">Hydrolase</keyword>
<keyword id="KW-0460">Magnesium</keyword>
<keyword id="KW-1185">Reference proteome</keyword>
<protein>
    <recommendedName>
        <fullName evidence="1">Probable 2-phosphosulfolactate phosphatase</fullName>
        <ecNumber evidence="1">3.1.3.71</ecNumber>
    </recommendedName>
</protein>
<dbReference type="EC" id="3.1.3.71" evidence="1"/>
<dbReference type="EMBL" id="CP000382">
    <property type="protein sequence ID" value="ABK60442.1"/>
    <property type="molecule type" value="Genomic_DNA"/>
</dbReference>
<dbReference type="RefSeq" id="WP_011723061.1">
    <property type="nucleotide sequence ID" value="NC_008593.1"/>
</dbReference>
<dbReference type="SMR" id="A0Q380"/>
<dbReference type="STRING" id="386415.NT01CX_0616"/>
<dbReference type="KEGG" id="cno:NT01CX_0616"/>
<dbReference type="PATRIC" id="fig|386415.7.peg.2119"/>
<dbReference type="eggNOG" id="COG2045">
    <property type="taxonomic scope" value="Bacteria"/>
</dbReference>
<dbReference type="HOGENOM" id="CLU_070028_0_0_9"/>
<dbReference type="Proteomes" id="UP000008220">
    <property type="component" value="Chromosome"/>
</dbReference>
<dbReference type="GO" id="GO:0050532">
    <property type="term" value="F:2-phosphosulfolactate phosphatase activity"/>
    <property type="evidence" value="ECO:0007669"/>
    <property type="project" value="UniProtKB-UniRule"/>
</dbReference>
<dbReference type="GO" id="GO:0000287">
    <property type="term" value="F:magnesium ion binding"/>
    <property type="evidence" value="ECO:0007669"/>
    <property type="project" value="UniProtKB-UniRule"/>
</dbReference>
<dbReference type="GO" id="GO:0050545">
    <property type="term" value="F:sulfopyruvate decarboxylase activity"/>
    <property type="evidence" value="ECO:0007669"/>
    <property type="project" value="TreeGrafter"/>
</dbReference>
<dbReference type="FunFam" id="3.90.1560.10:FF:000001">
    <property type="entry name" value="Probable 2-phosphosulfolactate phosphatase"/>
    <property type="match status" value="1"/>
</dbReference>
<dbReference type="Gene3D" id="3.90.1560.10">
    <property type="entry name" value="ComB-like"/>
    <property type="match status" value="1"/>
</dbReference>
<dbReference type="HAMAP" id="MF_00490">
    <property type="entry name" value="ComB"/>
    <property type="match status" value="1"/>
</dbReference>
<dbReference type="InterPro" id="IPR005238">
    <property type="entry name" value="ComB-like"/>
</dbReference>
<dbReference type="InterPro" id="IPR036702">
    <property type="entry name" value="ComB-like_sf"/>
</dbReference>
<dbReference type="NCBIfam" id="NF002055">
    <property type="entry name" value="PRK00886.1-4"/>
    <property type="match status" value="1"/>
</dbReference>
<dbReference type="PANTHER" id="PTHR37311">
    <property type="entry name" value="2-PHOSPHOSULFOLACTATE PHOSPHATASE-RELATED"/>
    <property type="match status" value="1"/>
</dbReference>
<dbReference type="PANTHER" id="PTHR37311:SF1">
    <property type="entry name" value="2-PHOSPHOSULFOLACTATE PHOSPHATASE-RELATED"/>
    <property type="match status" value="1"/>
</dbReference>
<dbReference type="Pfam" id="PF04029">
    <property type="entry name" value="2-ph_phosp"/>
    <property type="match status" value="1"/>
</dbReference>
<dbReference type="SUPFAM" id="SSF142823">
    <property type="entry name" value="ComB-like"/>
    <property type="match status" value="1"/>
</dbReference>
<proteinExistence type="inferred from homology"/>
<comment type="catalytic activity">
    <reaction evidence="1">
        <text>(2R)-O-phospho-3-sulfolactate + H2O = (2R)-3-sulfolactate + phosphate</text>
        <dbReference type="Rhea" id="RHEA:23416"/>
        <dbReference type="ChEBI" id="CHEBI:15377"/>
        <dbReference type="ChEBI" id="CHEBI:15597"/>
        <dbReference type="ChEBI" id="CHEBI:43474"/>
        <dbReference type="ChEBI" id="CHEBI:58738"/>
        <dbReference type="EC" id="3.1.3.71"/>
    </reaction>
</comment>
<comment type="cofactor">
    <cofactor evidence="1">
        <name>Mg(2+)</name>
        <dbReference type="ChEBI" id="CHEBI:18420"/>
    </cofactor>
</comment>
<comment type="similarity">
    <text evidence="1">Belongs to the ComB family.</text>
</comment>
<name>COMB_CLONN</name>
<accession>A0Q380</accession>
<feature type="chain" id="PRO_1000014462" description="Probable 2-phosphosulfolactate phosphatase">
    <location>
        <begin position="1"/>
        <end position="235"/>
    </location>
</feature>
<gene>
    <name evidence="1" type="primary">comB</name>
    <name type="ordered locus">NT01CX_0616</name>
</gene>